<accession>A8WFF7</accession>
<feature type="chain" id="PRO_0000340696" description="Uncharacterized protein C11orf91 homolog">
    <location>
        <begin position="1"/>
        <end position="193"/>
    </location>
</feature>
<feature type="region of interest" description="Disordered" evidence="1">
    <location>
        <begin position="1"/>
        <end position="21"/>
    </location>
</feature>
<feature type="region of interest" description="Disordered" evidence="1">
    <location>
        <begin position="53"/>
        <end position="96"/>
    </location>
</feature>
<feature type="region of interest" description="Disordered" evidence="1">
    <location>
        <begin position="114"/>
        <end position="136"/>
    </location>
</feature>
<feature type="compositionally biased region" description="Low complexity" evidence="1">
    <location>
        <begin position="53"/>
        <end position="70"/>
    </location>
</feature>
<feature type="compositionally biased region" description="Pro residues" evidence="1">
    <location>
        <begin position="71"/>
        <end position="95"/>
    </location>
</feature>
<feature type="compositionally biased region" description="Low complexity" evidence="1">
    <location>
        <begin position="116"/>
        <end position="127"/>
    </location>
</feature>
<reference key="1">
    <citation type="submission" date="2007-06" db="EMBL/GenBank/DDBJ databases">
        <authorList>
            <consortium name="NIH - Mammalian Gene Collection (MGC) project"/>
        </authorList>
    </citation>
    <scope>NUCLEOTIDE SEQUENCE [LARGE SCALE MRNA]</scope>
    <source>
        <strain>Crossbred X Angus</strain>
        <tissue>Liver</tissue>
    </source>
</reference>
<proteinExistence type="evidence at transcript level"/>
<name>CK091_BOVIN</name>
<dbReference type="EMBL" id="BC142062">
    <property type="protein sequence ID" value="AAI42063.1"/>
    <property type="molecule type" value="mRNA"/>
</dbReference>
<dbReference type="RefSeq" id="NP_001103655.1">
    <property type="nucleotide sequence ID" value="NM_001110185.2"/>
</dbReference>
<dbReference type="SMR" id="A8WFF7"/>
<dbReference type="FunCoup" id="A8WFF7">
    <property type="interactions" value="1"/>
</dbReference>
<dbReference type="STRING" id="9913.ENSBTAP00000039473"/>
<dbReference type="PaxDb" id="9913-ENSBTAP00000039473"/>
<dbReference type="Ensembl" id="ENSBTAT00000039684.4">
    <property type="protein sequence ID" value="ENSBTAP00000039473.3"/>
    <property type="gene ID" value="ENSBTAG00000027577.4"/>
</dbReference>
<dbReference type="GeneID" id="781657"/>
<dbReference type="KEGG" id="bta:781657"/>
<dbReference type="CTD" id="781657"/>
<dbReference type="VEuPathDB" id="HostDB:ENSBTAG00000027577"/>
<dbReference type="VGNC" id="VGNC:52635">
    <property type="gene designation" value="C15H11orf91"/>
</dbReference>
<dbReference type="eggNOG" id="ENOG502S5Z2">
    <property type="taxonomic scope" value="Eukaryota"/>
</dbReference>
<dbReference type="GeneTree" id="ENSGT00390000002169"/>
<dbReference type="HOGENOM" id="CLU_1402030_0_0_1"/>
<dbReference type="InParanoid" id="A8WFF7"/>
<dbReference type="OMA" id="RCCPPPW"/>
<dbReference type="OrthoDB" id="9938805at2759"/>
<dbReference type="TreeFam" id="TF339799"/>
<dbReference type="Proteomes" id="UP000009136">
    <property type="component" value="Chromosome 15"/>
</dbReference>
<dbReference type="Bgee" id="ENSBTAG00000027577">
    <property type="expression patterns" value="Expressed in spermatid and 24 other cell types or tissues"/>
</dbReference>
<dbReference type="InterPro" id="IPR040027">
    <property type="entry name" value="C11orf91-like"/>
</dbReference>
<dbReference type="PANTHER" id="PTHR36288">
    <property type="entry name" value="SIMILAR TO RIKEN CDNA A930018P22"/>
    <property type="match status" value="1"/>
</dbReference>
<dbReference type="PANTHER" id="PTHR36288:SF1">
    <property type="entry name" value="SIMILAR TO RIKEN CDNA A930018P22"/>
    <property type="match status" value="1"/>
</dbReference>
<dbReference type="Pfam" id="PF17669">
    <property type="entry name" value="DUF5529"/>
    <property type="match status" value="1"/>
</dbReference>
<protein>
    <recommendedName>
        <fullName>Uncharacterized protein C11orf91 homolog</fullName>
    </recommendedName>
</protein>
<evidence type="ECO:0000256" key="1">
    <source>
        <dbReference type="SAM" id="MobiDB-lite"/>
    </source>
</evidence>
<organism>
    <name type="scientific">Bos taurus</name>
    <name type="common">Bovine</name>
    <dbReference type="NCBI Taxonomy" id="9913"/>
    <lineage>
        <taxon>Eukaryota</taxon>
        <taxon>Metazoa</taxon>
        <taxon>Chordata</taxon>
        <taxon>Craniata</taxon>
        <taxon>Vertebrata</taxon>
        <taxon>Euteleostomi</taxon>
        <taxon>Mammalia</taxon>
        <taxon>Eutheria</taxon>
        <taxon>Laurasiatheria</taxon>
        <taxon>Artiodactyla</taxon>
        <taxon>Ruminantia</taxon>
        <taxon>Pecora</taxon>
        <taxon>Bovidae</taxon>
        <taxon>Bovinae</taxon>
        <taxon>Bos</taxon>
    </lineage>
</organism>
<sequence>MPKGRRGSQSPTMSQRPAPPLYFPSLYDRGISSSPLSDFNIWKKLFVPLKAGGAPAGGAPAAGGRSLPQGPSAPAPPPPPGLGPPSERPCPPPWPSGLASIPYEPLRFFYSPPSGPEAAASPLAPGPMTSRLASASHPEELCELEIRIKELELLTITGDGFDSQRYKFLKALKDEKLQGLKTRQPGKKSASLS</sequence>
<keyword id="KW-1185">Reference proteome</keyword>